<name>GSPN_AERHY</name>
<reference key="1">
    <citation type="journal article" date="1993" name="J. Bacteriol.">
        <title>Isolation and analysis of eight exe genes and their involvement in extracellular protein secretion and outer membrane assembly in Aeromonas hydrophila.</title>
        <authorList>
            <person name="Howard S.P."/>
            <person name="Critch J."/>
            <person name="Bedi A."/>
        </authorList>
    </citation>
    <scope>NUCLEOTIDE SEQUENCE [GENOMIC DNA]</scope>
    <source>
        <strain>Ah65</strain>
    </source>
</reference>
<feature type="chain" id="PRO_0000195051" description="Type II secretion system protein N">
    <location>
        <begin position="1"/>
        <end position="252"/>
    </location>
</feature>
<feature type="topological domain" description="Cytoplasmic" evidence="2">
    <location>
        <begin position="1"/>
        <end position="4"/>
    </location>
</feature>
<feature type="transmembrane region" description="Helical" evidence="2">
    <location>
        <begin position="5"/>
        <end position="25"/>
    </location>
</feature>
<feature type="topological domain" description="Periplasmic" evidence="2">
    <location>
        <begin position="26"/>
        <end position="252"/>
    </location>
</feature>
<gene>
    <name type="primary">exeN</name>
</gene>
<accession>P41852</accession>
<evidence type="ECO:0000250" key="1"/>
<evidence type="ECO:0000255" key="2"/>
<evidence type="ECO:0000305" key="3"/>
<sequence length="252" mass="27828">MKQKVLIAALFLVAYLGFLLVKLPATLVVRHLPLPPNLVQLEGVSGTLWSGQVARLQYASESLTQLRWELNGWSLLRFAPEVSLRFGDRSGLNGQGVVGWNGAAFGRDITLNVPAPWVLDRVPMRLPFPLTVAGQLQLKVDQFAQGNPWCDNLYGNLHWYGADADTPAGKLPLGDPELKLTCIDSRLVAELKQGSEAVQVLGKLELQPNRQYLFQGTLKPGPELPDQMKQGLPFLGQPDGQGRFPLRYQGRI</sequence>
<keyword id="KW-0997">Cell inner membrane</keyword>
<keyword id="KW-1003">Cell membrane</keyword>
<keyword id="KW-0472">Membrane</keyword>
<keyword id="KW-0653">Protein transport</keyword>
<keyword id="KW-0812">Transmembrane</keyword>
<keyword id="KW-1133">Transmembrane helix</keyword>
<keyword id="KW-0813">Transport</keyword>
<proteinExistence type="inferred from homology"/>
<dbReference type="EMBL" id="X66504">
    <property type="protein sequence ID" value="CAA47135.1"/>
    <property type="molecule type" value="Genomic_DNA"/>
</dbReference>
<dbReference type="PIR" id="G49905">
    <property type="entry name" value="G49905"/>
</dbReference>
<dbReference type="eggNOG" id="ENOG5032RTB">
    <property type="taxonomic scope" value="Bacteria"/>
</dbReference>
<dbReference type="GO" id="GO:0005886">
    <property type="term" value="C:plasma membrane"/>
    <property type="evidence" value="ECO:0007669"/>
    <property type="project" value="UniProtKB-SubCell"/>
</dbReference>
<dbReference type="GO" id="GO:0015627">
    <property type="term" value="C:type II protein secretion system complex"/>
    <property type="evidence" value="ECO:0007669"/>
    <property type="project" value="InterPro"/>
</dbReference>
<dbReference type="GO" id="GO:0015628">
    <property type="term" value="P:protein secretion by the type II secretion system"/>
    <property type="evidence" value="ECO:0007669"/>
    <property type="project" value="InterPro"/>
</dbReference>
<dbReference type="InterPro" id="IPR000645">
    <property type="entry name" value="T2SS_GspN_CS"/>
</dbReference>
<dbReference type="InterPro" id="IPR022792">
    <property type="entry name" value="T2SS_protein-GspN"/>
</dbReference>
<dbReference type="Pfam" id="PF01203">
    <property type="entry name" value="T2SSN"/>
    <property type="match status" value="1"/>
</dbReference>
<dbReference type="PROSITE" id="PS01142">
    <property type="entry name" value="T2SP_N"/>
    <property type="match status" value="1"/>
</dbReference>
<protein>
    <recommendedName>
        <fullName>Type II secretion system protein N</fullName>
        <shortName>T2SS protein N</shortName>
    </recommendedName>
    <alternativeName>
        <fullName>General secretion pathway protein N</fullName>
    </alternativeName>
</protein>
<comment type="function">
    <text evidence="1">Involved in a type II secretion system (T2SS, formerly general secretion pathway, GSP) for the export of proteins.</text>
</comment>
<comment type="subcellular location">
    <subcellularLocation>
        <location evidence="3">Cell inner membrane</location>
    </subcellularLocation>
</comment>
<comment type="similarity">
    <text evidence="3">Belongs to the GSP N family.</text>
</comment>
<organism>
    <name type="scientific">Aeromonas hydrophila</name>
    <dbReference type="NCBI Taxonomy" id="644"/>
    <lineage>
        <taxon>Bacteria</taxon>
        <taxon>Pseudomonadati</taxon>
        <taxon>Pseudomonadota</taxon>
        <taxon>Gammaproteobacteria</taxon>
        <taxon>Aeromonadales</taxon>
        <taxon>Aeromonadaceae</taxon>
        <taxon>Aeromonas</taxon>
    </lineage>
</organism>